<name>GLPG_SALA4</name>
<accession>B5F8P0</accession>
<reference key="1">
    <citation type="journal article" date="2011" name="J. Bacteriol.">
        <title>Comparative genomics of 28 Salmonella enterica isolates: evidence for CRISPR-mediated adaptive sublineage evolution.</title>
        <authorList>
            <person name="Fricke W.F."/>
            <person name="Mammel M.K."/>
            <person name="McDermott P.F."/>
            <person name="Tartera C."/>
            <person name="White D.G."/>
            <person name="Leclerc J.E."/>
            <person name="Ravel J."/>
            <person name="Cebula T.A."/>
        </authorList>
    </citation>
    <scope>NUCLEOTIDE SEQUENCE [LARGE SCALE GENOMIC DNA]</scope>
    <source>
        <strain>SL483</strain>
    </source>
</reference>
<comment type="function">
    <text evidence="1">Rhomboid-type serine protease that catalyzes intramembrane proteolysis.</text>
</comment>
<comment type="catalytic activity">
    <reaction evidence="1">
        <text>Cleaves type-1 transmembrane domains using a catalytic dyad composed of serine and histidine that are contributed by different transmembrane domains.</text>
        <dbReference type="EC" id="3.4.21.105"/>
    </reaction>
</comment>
<comment type="subcellular location">
    <subcellularLocation>
        <location evidence="1">Cell inner membrane</location>
        <topology evidence="1">Multi-pass membrane protein</topology>
    </subcellularLocation>
</comment>
<comment type="similarity">
    <text evidence="1">Belongs to the peptidase S54 family.</text>
</comment>
<comment type="sequence caution" evidence="2">
    <conflict type="erroneous initiation">
        <sequence resource="EMBL-CDS" id="ACH50297"/>
    </conflict>
</comment>
<evidence type="ECO:0000255" key="1">
    <source>
        <dbReference type="HAMAP-Rule" id="MF_01594"/>
    </source>
</evidence>
<evidence type="ECO:0000305" key="2"/>
<organism>
    <name type="scientific">Salmonella agona (strain SL483)</name>
    <dbReference type="NCBI Taxonomy" id="454166"/>
    <lineage>
        <taxon>Bacteria</taxon>
        <taxon>Pseudomonadati</taxon>
        <taxon>Pseudomonadota</taxon>
        <taxon>Gammaproteobacteria</taxon>
        <taxon>Enterobacterales</taxon>
        <taxon>Enterobacteriaceae</taxon>
        <taxon>Salmonella</taxon>
    </lineage>
</organism>
<feature type="chain" id="PRO_0000381768" description="Rhomboid protease GlpG">
    <location>
        <begin position="1"/>
        <end position="276"/>
    </location>
</feature>
<feature type="transmembrane region" description="Helical" evidence="1">
    <location>
        <begin position="94"/>
        <end position="114"/>
    </location>
</feature>
<feature type="transmembrane region" description="Helical" evidence="1">
    <location>
        <begin position="142"/>
        <end position="162"/>
    </location>
</feature>
<feature type="transmembrane region" description="Helical" evidence="1">
    <location>
        <begin position="169"/>
        <end position="189"/>
    </location>
</feature>
<feature type="transmembrane region" description="Helical" evidence="1">
    <location>
        <begin position="192"/>
        <end position="212"/>
    </location>
</feature>
<feature type="transmembrane region" description="Helical" evidence="1">
    <location>
        <begin position="229"/>
        <end position="249"/>
    </location>
</feature>
<feature type="transmembrane region" description="Helical" evidence="1">
    <location>
        <begin position="250"/>
        <end position="270"/>
    </location>
</feature>
<feature type="active site" description="Nucleophile" evidence="1">
    <location>
        <position position="201"/>
    </location>
</feature>
<feature type="active site" evidence="1">
    <location>
        <position position="254"/>
    </location>
</feature>
<dbReference type="EC" id="3.4.21.105" evidence="1"/>
<dbReference type="EMBL" id="CP001138">
    <property type="protein sequence ID" value="ACH50297.1"/>
    <property type="status" value="ALT_INIT"/>
    <property type="molecule type" value="Genomic_DNA"/>
</dbReference>
<dbReference type="RefSeq" id="WP_000928702.1">
    <property type="nucleotide sequence ID" value="NC_011149.1"/>
</dbReference>
<dbReference type="SMR" id="B5F8P0"/>
<dbReference type="MEROPS" id="S54.016"/>
<dbReference type="KEGG" id="sea:SeAg_B3725"/>
<dbReference type="HOGENOM" id="CLU_058989_0_0_6"/>
<dbReference type="Proteomes" id="UP000008819">
    <property type="component" value="Chromosome"/>
</dbReference>
<dbReference type="GO" id="GO:0005886">
    <property type="term" value="C:plasma membrane"/>
    <property type="evidence" value="ECO:0007669"/>
    <property type="project" value="UniProtKB-SubCell"/>
</dbReference>
<dbReference type="GO" id="GO:0004252">
    <property type="term" value="F:serine-type endopeptidase activity"/>
    <property type="evidence" value="ECO:0007669"/>
    <property type="project" value="UniProtKB-UniRule"/>
</dbReference>
<dbReference type="GO" id="GO:0006508">
    <property type="term" value="P:proteolysis"/>
    <property type="evidence" value="ECO:0007669"/>
    <property type="project" value="UniProtKB-UniRule"/>
</dbReference>
<dbReference type="FunFam" id="1.20.1540.10:FF:000003">
    <property type="entry name" value="Rhomboid protease GlpG"/>
    <property type="match status" value="1"/>
</dbReference>
<dbReference type="FunFam" id="3.30.70.2350:FF:000001">
    <property type="entry name" value="Rhomboid protease GlpG"/>
    <property type="match status" value="1"/>
</dbReference>
<dbReference type="Gene3D" id="3.30.70.2350">
    <property type="match status" value="1"/>
</dbReference>
<dbReference type="Gene3D" id="1.20.1540.10">
    <property type="entry name" value="Rhomboid-like"/>
    <property type="match status" value="1"/>
</dbReference>
<dbReference type="HAMAP" id="MF_01594">
    <property type="entry name" value="Rhomboid_GlpG"/>
    <property type="match status" value="1"/>
</dbReference>
<dbReference type="InterPro" id="IPR038236">
    <property type="entry name" value="GlpG_N_sf"/>
</dbReference>
<dbReference type="InterPro" id="IPR022732">
    <property type="entry name" value="Peptidase_S54_GlpG_N"/>
</dbReference>
<dbReference type="InterPro" id="IPR022764">
    <property type="entry name" value="Peptidase_S54_rhomboid_dom"/>
</dbReference>
<dbReference type="InterPro" id="IPR035952">
    <property type="entry name" value="Rhomboid-like_sf"/>
</dbReference>
<dbReference type="InterPro" id="IPR023662">
    <property type="entry name" value="Rhomboid_protease_GlpG"/>
</dbReference>
<dbReference type="NCBIfam" id="NF008155">
    <property type="entry name" value="PRK10907.1"/>
    <property type="match status" value="1"/>
</dbReference>
<dbReference type="NCBIfam" id="TIGR04239">
    <property type="entry name" value="rhombo_GlpG"/>
    <property type="match status" value="1"/>
</dbReference>
<dbReference type="PANTHER" id="PTHR43066:SF26">
    <property type="entry name" value="RHOMBOID PROTEASE GLPG"/>
    <property type="match status" value="1"/>
</dbReference>
<dbReference type="PANTHER" id="PTHR43066">
    <property type="entry name" value="RHOMBOID-RELATED PROTEIN"/>
    <property type="match status" value="1"/>
</dbReference>
<dbReference type="Pfam" id="PF01694">
    <property type="entry name" value="Rhomboid"/>
    <property type="match status" value="1"/>
</dbReference>
<dbReference type="Pfam" id="PF12122">
    <property type="entry name" value="Rhomboid_N"/>
    <property type="match status" value="1"/>
</dbReference>
<dbReference type="SUPFAM" id="SSF144091">
    <property type="entry name" value="Rhomboid-like"/>
    <property type="match status" value="1"/>
</dbReference>
<sequence>MLMITSFANPRVAQAFVDYMATQGVILTIQQHNQSDIWLADESQAERVRVELARFIENPGDPRYLAASWQSGQTNSGLRYRRFPFLATLRERAGPVTWIVMLACVLVYIAMSLIGDQTVMVWLAWPFDPVLKFEVWRYFTHIFMHFSLMHILFNLLWWWYLGGAVEKRLGSGKLIVITVISALLSGYVQQKFSGPWFGGLSGVVYALMGYVWLRGERDPQSGIYLQRGLIIFALLWIVAGWFDWFGMSMANGAHIAGLIVGLAMAFVDTLNARKRT</sequence>
<protein>
    <recommendedName>
        <fullName evidence="1">Rhomboid protease GlpG</fullName>
        <ecNumber evidence="1">3.4.21.105</ecNumber>
    </recommendedName>
    <alternativeName>
        <fullName evidence="1">Intramembrane serine protease</fullName>
    </alternativeName>
</protein>
<gene>
    <name evidence="1" type="primary">glpG</name>
    <name type="ordered locus">SeAg_B3725</name>
</gene>
<proteinExistence type="inferred from homology"/>
<keyword id="KW-0997">Cell inner membrane</keyword>
<keyword id="KW-1003">Cell membrane</keyword>
<keyword id="KW-0378">Hydrolase</keyword>
<keyword id="KW-0472">Membrane</keyword>
<keyword id="KW-0645">Protease</keyword>
<keyword id="KW-0720">Serine protease</keyword>
<keyword id="KW-0812">Transmembrane</keyword>
<keyword id="KW-1133">Transmembrane helix</keyword>